<accession>A0Q5I1</accession>
<gene>
    <name evidence="1" type="primary">pdxS</name>
    <name type="ordered locus">FTN_0601</name>
</gene>
<keyword id="KW-0456">Lyase</keyword>
<keyword id="KW-0663">Pyridoxal phosphate</keyword>
<keyword id="KW-0704">Schiff base</keyword>
<organism>
    <name type="scientific">Francisella tularensis subsp. novicida (strain U112)</name>
    <dbReference type="NCBI Taxonomy" id="401614"/>
    <lineage>
        <taxon>Bacteria</taxon>
        <taxon>Pseudomonadati</taxon>
        <taxon>Pseudomonadota</taxon>
        <taxon>Gammaproteobacteria</taxon>
        <taxon>Thiotrichales</taxon>
        <taxon>Francisellaceae</taxon>
        <taxon>Francisella</taxon>
    </lineage>
</organism>
<feature type="chain" id="PRO_1000070373" description="Pyridoxal 5'-phosphate synthase subunit PdxS">
    <location>
        <begin position="1"/>
        <end position="287"/>
    </location>
</feature>
<feature type="active site" description="Schiff-base intermediate with D-ribose 5-phosphate" evidence="1">
    <location>
        <position position="78"/>
    </location>
</feature>
<feature type="binding site" evidence="1">
    <location>
        <position position="21"/>
    </location>
    <ligand>
        <name>D-ribose 5-phosphate</name>
        <dbReference type="ChEBI" id="CHEBI:78346"/>
    </ligand>
</feature>
<feature type="binding site" evidence="1">
    <location>
        <position position="150"/>
    </location>
    <ligand>
        <name>D-ribose 5-phosphate</name>
        <dbReference type="ChEBI" id="CHEBI:78346"/>
    </ligand>
</feature>
<feature type="binding site" evidence="1">
    <location>
        <position position="162"/>
    </location>
    <ligand>
        <name>D-glyceraldehyde 3-phosphate</name>
        <dbReference type="ChEBI" id="CHEBI:59776"/>
    </ligand>
</feature>
<feature type="binding site" evidence="1">
    <location>
        <position position="211"/>
    </location>
    <ligand>
        <name>D-ribose 5-phosphate</name>
        <dbReference type="ChEBI" id="CHEBI:78346"/>
    </ligand>
</feature>
<feature type="binding site" evidence="1">
    <location>
        <begin position="232"/>
        <end position="233"/>
    </location>
    <ligand>
        <name>D-ribose 5-phosphate</name>
        <dbReference type="ChEBI" id="CHEBI:78346"/>
    </ligand>
</feature>
<reference key="1">
    <citation type="journal article" date="2007" name="Genome Biol.">
        <title>Comparison of Francisella tularensis genomes reveals evolutionary events associated with the emergence of human pathogenic strains.</title>
        <authorList>
            <person name="Rohmer L."/>
            <person name="Fong C."/>
            <person name="Abmayr S."/>
            <person name="Wasnick M."/>
            <person name="Larson Freeman T.J."/>
            <person name="Radey M."/>
            <person name="Guina T."/>
            <person name="Svensson K."/>
            <person name="Hayden H.S."/>
            <person name="Jacobs M."/>
            <person name="Gallagher L.A."/>
            <person name="Manoil C."/>
            <person name="Ernst R.K."/>
            <person name="Drees B."/>
            <person name="Buckley D."/>
            <person name="Haugen E."/>
            <person name="Bovee D."/>
            <person name="Zhou Y."/>
            <person name="Chang J."/>
            <person name="Levy R."/>
            <person name="Lim R."/>
            <person name="Gillett W."/>
            <person name="Guenthener D."/>
            <person name="Kang A."/>
            <person name="Shaffer S.A."/>
            <person name="Taylor G."/>
            <person name="Chen J."/>
            <person name="Gallis B."/>
            <person name="D'Argenio D.A."/>
            <person name="Forsman M."/>
            <person name="Olson M.V."/>
            <person name="Goodlett D.R."/>
            <person name="Kaul R."/>
            <person name="Miller S.I."/>
            <person name="Brittnacher M.J."/>
        </authorList>
    </citation>
    <scope>NUCLEOTIDE SEQUENCE [LARGE SCALE GENOMIC DNA]</scope>
    <source>
        <strain>U112</strain>
    </source>
</reference>
<protein>
    <recommendedName>
        <fullName evidence="1">Pyridoxal 5'-phosphate synthase subunit PdxS</fullName>
        <shortName evidence="1">PLP synthase subunit PdxS</shortName>
        <ecNumber evidence="1">4.3.3.6</ecNumber>
    </recommendedName>
    <alternativeName>
        <fullName evidence="1">Pdx1</fullName>
    </alternativeName>
</protein>
<evidence type="ECO:0000255" key="1">
    <source>
        <dbReference type="HAMAP-Rule" id="MF_01824"/>
    </source>
</evidence>
<name>PDXS_FRATN</name>
<proteinExistence type="inferred from homology"/>
<dbReference type="EC" id="4.3.3.6" evidence="1"/>
<dbReference type="EMBL" id="CP000439">
    <property type="protein sequence ID" value="ABK89496.1"/>
    <property type="molecule type" value="Genomic_DNA"/>
</dbReference>
<dbReference type="RefSeq" id="WP_003016899.1">
    <property type="nucleotide sequence ID" value="NZ_CP009633.1"/>
</dbReference>
<dbReference type="SMR" id="A0Q5I1"/>
<dbReference type="KEGG" id="ftn:FTN_0601"/>
<dbReference type="KEGG" id="ftx:AW25_1427"/>
<dbReference type="BioCyc" id="FTUL401614:G1G75-626-MONOMER"/>
<dbReference type="UniPathway" id="UPA00245"/>
<dbReference type="Proteomes" id="UP000000762">
    <property type="component" value="Chromosome"/>
</dbReference>
<dbReference type="GO" id="GO:0036381">
    <property type="term" value="F:pyridoxal 5'-phosphate synthase (glutamine hydrolysing) activity"/>
    <property type="evidence" value="ECO:0007669"/>
    <property type="project" value="UniProtKB-UniRule"/>
</dbReference>
<dbReference type="GO" id="GO:0006520">
    <property type="term" value="P:amino acid metabolic process"/>
    <property type="evidence" value="ECO:0007669"/>
    <property type="project" value="TreeGrafter"/>
</dbReference>
<dbReference type="GO" id="GO:0042823">
    <property type="term" value="P:pyridoxal phosphate biosynthetic process"/>
    <property type="evidence" value="ECO:0007669"/>
    <property type="project" value="UniProtKB-UniRule"/>
</dbReference>
<dbReference type="GO" id="GO:0008615">
    <property type="term" value="P:pyridoxine biosynthetic process"/>
    <property type="evidence" value="ECO:0007669"/>
    <property type="project" value="TreeGrafter"/>
</dbReference>
<dbReference type="CDD" id="cd04727">
    <property type="entry name" value="pdxS"/>
    <property type="match status" value="1"/>
</dbReference>
<dbReference type="FunFam" id="3.20.20.70:FF:000001">
    <property type="entry name" value="Pyridoxine biosynthesis protein PDX1"/>
    <property type="match status" value="1"/>
</dbReference>
<dbReference type="Gene3D" id="3.20.20.70">
    <property type="entry name" value="Aldolase class I"/>
    <property type="match status" value="1"/>
</dbReference>
<dbReference type="HAMAP" id="MF_01824">
    <property type="entry name" value="PdxS"/>
    <property type="match status" value="1"/>
</dbReference>
<dbReference type="InterPro" id="IPR013785">
    <property type="entry name" value="Aldolase_TIM"/>
</dbReference>
<dbReference type="InterPro" id="IPR001852">
    <property type="entry name" value="PdxS/SNZ"/>
</dbReference>
<dbReference type="InterPro" id="IPR033755">
    <property type="entry name" value="PdxS/SNZ_N"/>
</dbReference>
<dbReference type="InterPro" id="IPR011060">
    <property type="entry name" value="RibuloseP-bd_barrel"/>
</dbReference>
<dbReference type="NCBIfam" id="NF003215">
    <property type="entry name" value="PRK04180.1"/>
    <property type="match status" value="1"/>
</dbReference>
<dbReference type="NCBIfam" id="TIGR00343">
    <property type="entry name" value="pyridoxal 5'-phosphate synthase lyase subunit PdxS"/>
    <property type="match status" value="1"/>
</dbReference>
<dbReference type="PANTHER" id="PTHR31829">
    <property type="entry name" value="PYRIDOXAL 5'-PHOSPHATE SYNTHASE SUBUNIT SNZ1-RELATED"/>
    <property type="match status" value="1"/>
</dbReference>
<dbReference type="PANTHER" id="PTHR31829:SF0">
    <property type="entry name" value="PYRIDOXAL 5'-PHOSPHATE SYNTHASE SUBUNIT SNZ1-RELATED"/>
    <property type="match status" value="1"/>
</dbReference>
<dbReference type="Pfam" id="PF01680">
    <property type="entry name" value="SOR_SNZ"/>
    <property type="match status" value="1"/>
</dbReference>
<dbReference type="PIRSF" id="PIRSF029271">
    <property type="entry name" value="Pdx1"/>
    <property type="match status" value="1"/>
</dbReference>
<dbReference type="SUPFAM" id="SSF51366">
    <property type="entry name" value="Ribulose-phoshate binding barrel"/>
    <property type="match status" value="1"/>
</dbReference>
<dbReference type="PROSITE" id="PS01235">
    <property type="entry name" value="PDXS_SNZ_1"/>
    <property type="match status" value="1"/>
</dbReference>
<dbReference type="PROSITE" id="PS51129">
    <property type="entry name" value="PDXS_SNZ_2"/>
    <property type="match status" value="1"/>
</dbReference>
<comment type="function">
    <text evidence="1">Catalyzes the formation of pyridoxal 5'-phosphate from ribose 5-phosphate (RBP), glyceraldehyde 3-phosphate (G3P) and ammonia. The ammonia is provided by the PdxT subunit. Can also use ribulose 5-phosphate and dihydroxyacetone phosphate as substrates, resulting from enzyme-catalyzed isomerization of RBP and G3P, respectively.</text>
</comment>
<comment type="catalytic activity">
    <reaction evidence="1">
        <text>aldehydo-D-ribose 5-phosphate + D-glyceraldehyde 3-phosphate + L-glutamine = pyridoxal 5'-phosphate + L-glutamate + phosphate + 3 H2O + H(+)</text>
        <dbReference type="Rhea" id="RHEA:31507"/>
        <dbReference type="ChEBI" id="CHEBI:15377"/>
        <dbReference type="ChEBI" id="CHEBI:15378"/>
        <dbReference type="ChEBI" id="CHEBI:29985"/>
        <dbReference type="ChEBI" id="CHEBI:43474"/>
        <dbReference type="ChEBI" id="CHEBI:58273"/>
        <dbReference type="ChEBI" id="CHEBI:58359"/>
        <dbReference type="ChEBI" id="CHEBI:59776"/>
        <dbReference type="ChEBI" id="CHEBI:597326"/>
        <dbReference type="EC" id="4.3.3.6"/>
    </reaction>
</comment>
<comment type="pathway">
    <text evidence="1">Cofactor biosynthesis; pyridoxal 5'-phosphate biosynthesis.</text>
</comment>
<comment type="subunit">
    <text evidence="1">In the presence of PdxT, forms a dodecamer of heterodimers.</text>
</comment>
<comment type="similarity">
    <text evidence="1">Belongs to the PdxS/SNZ family.</text>
</comment>
<sequence>MSDINIKIGLAEMLKGGVIMDVVNAEQAEIAQQAGAVAVMALERVPADIRKDGGIARMSDPKLIKEIMSVVSIPVMAKARIGHFVEAQILESLGVDFIDESEVLTPADELNHIDKDSFKVPFVCGCTNLGEALRRIGEGAALIRTKGEAGTGNIVEAVRQLRQVNKDINYIKNADKSELMAIAKNLQAPYDLVTYVHKNGKLPVPNFSAGGVATPADAALMMQLGAESVFVGSGIFKSADPLKRARAIVSAVTYYNDAKILAEVSEDLGEPMTGINCDFEKFSQRGW</sequence>